<accession>Q9A1V6</accession>
<accession>Q491N7</accession>
<feature type="chain" id="PRO_0000273868" description="Large ribosomal subunit protein uL30">
    <location>
        <begin position="1"/>
        <end position="60"/>
    </location>
</feature>
<proteinExistence type="inferred from homology"/>
<reference key="1">
    <citation type="journal article" date="2001" name="Proc. Natl. Acad. Sci. U.S.A.">
        <title>Complete genome sequence of an M1 strain of Streptococcus pyogenes.</title>
        <authorList>
            <person name="Ferretti J.J."/>
            <person name="McShan W.M."/>
            <person name="Ajdic D.J."/>
            <person name="Savic D.J."/>
            <person name="Savic G."/>
            <person name="Lyon K."/>
            <person name="Primeaux C."/>
            <person name="Sezate S."/>
            <person name="Suvorov A.N."/>
            <person name="Kenton S."/>
            <person name="Lai H.S."/>
            <person name="Lin S.P."/>
            <person name="Qian Y."/>
            <person name="Jia H.G."/>
            <person name="Najar F.Z."/>
            <person name="Ren Q."/>
            <person name="Zhu H."/>
            <person name="Song L."/>
            <person name="White J."/>
            <person name="Yuan X."/>
            <person name="Clifton S.W."/>
            <person name="Roe B.A."/>
            <person name="McLaughlin R.E."/>
        </authorList>
    </citation>
    <scope>NUCLEOTIDE SEQUENCE [LARGE SCALE GENOMIC DNA]</scope>
    <source>
        <strain>ATCC 700294 / SF370 / Serotype M1</strain>
    </source>
</reference>
<reference key="2">
    <citation type="journal article" date="2005" name="J. Infect. Dis.">
        <title>Evolutionary origin and emergence of a highly successful clone of serotype M1 group A Streptococcus involved multiple horizontal gene transfer events.</title>
        <authorList>
            <person name="Sumby P."/>
            <person name="Porcella S.F."/>
            <person name="Madrigal A.G."/>
            <person name="Barbian K.D."/>
            <person name="Virtaneva K."/>
            <person name="Ricklefs S.M."/>
            <person name="Sturdevant D.E."/>
            <person name="Graham M.R."/>
            <person name="Vuopio-Varkila J."/>
            <person name="Hoe N.P."/>
            <person name="Musser J.M."/>
        </authorList>
    </citation>
    <scope>NUCLEOTIDE SEQUENCE [LARGE SCALE GENOMIC DNA]</scope>
    <source>
        <strain>ATCC BAA-947 / MGAS5005 / Serotype M1</strain>
    </source>
</reference>
<keyword id="KW-1185">Reference proteome</keyword>
<keyword id="KW-0687">Ribonucleoprotein</keyword>
<keyword id="KW-0689">Ribosomal protein</keyword>
<gene>
    <name evidence="1" type="primary">rpmD</name>
    <name type="ordered locus">SPy_0071</name>
    <name type="ordered locus">M5005_Spy0062</name>
</gene>
<comment type="subunit">
    <text evidence="1">Part of the 50S ribosomal subunit.</text>
</comment>
<comment type="similarity">
    <text evidence="1">Belongs to the universal ribosomal protein uL30 family.</text>
</comment>
<evidence type="ECO:0000255" key="1">
    <source>
        <dbReference type="HAMAP-Rule" id="MF_01371"/>
    </source>
</evidence>
<evidence type="ECO:0000305" key="2"/>
<dbReference type="EMBL" id="AE004092">
    <property type="protein sequence ID" value="AAK33200.1"/>
    <property type="molecule type" value="Genomic_DNA"/>
</dbReference>
<dbReference type="EMBL" id="CP000017">
    <property type="protein sequence ID" value="AAZ50681.1"/>
    <property type="molecule type" value="Genomic_DNA"/>
</dbReference>
<dbReference type="RefSeq" id="NP_268478.1">
    <property type="nucleotide sequence ID" value="NC_002737.2"/>
</dbReference>
<dbReference type="SMR" id="Q9A1V6"/>
<dbReference type="PaxDb" id="1314-HKU360_00095"/>
<dbReference type="KEGG" id="spy:SPy_0071"/>
<dbReference type="KEGG" id="spz:M5005_Spy0062"/>
<dbReference type="PATRIC" id="fig|160490.10.peg.62"/>
<dbReference type="HOGENOM" id="CLU_131047_2_1_9"/>
<dbReference type="OMA" id="KMHKTRE"/>
<dbReference type="PRO" id="PR:Q9A1V6"/>
<dbReference type="Proteomes" id="UP000000750">
    <property type="component" value="Chromosome"/>
</dbReference>
<dbReference type="GO" id="GO:0022625">
    <property type="term" value="C:cytosolic large ribosomal subunit"/>
    <property type="evidence" value="ECO:0007669"/>
    <property type="project" value="TreeGrafter"/>
</dbReference>
<dbReference type="GO" id="GO:0003735">
    <property type="term" value="F:structural constituent of ribosome"/>
    <property type="evidence" value="ECO:0007669"/>
    <property type="project" value="InterPro"/>
</dbReference>
<dbReference type="GO" id="GO:0006412">
    <property type="term" value="P:translation"/>
    <property type="evidence" value="ECO:0007669"/>
    <property type="project" value="UniProtKB-UniRule"/>
</dbReference>
<dbReference type="CDD" id="cd01658">
    <property type="entry name" value="Ribosomal_L30"/>
    <property type="match status" value="1"/>
</dbReference>
<dbReference type="FunFam" id="3.30.1390.20:FF:000001">
    <property type="entry name" value="50S ribosomal protein L30"/>
    <property type="match status" value="1"/>
</dbReference>
<dbReference type="Gene3D" id="3.30.1390.20">
    <property type="entry name" value="Ribosomal protein L30, ferredoxin-like fold domain"/>
    <property type="match status" value="1"/>
</dbReference>
<dbReference type="HAMAP" id="MF_01371_B">
    <property type="entry name" value="Ribosomal_uL30_B"/>
    <property type="match status" value="1"/>
</dbReference>
<dbReference type="InterPro" id="IPR036919">
    <property type="entry name" value="Ribo_uL30_ferredoxin-like_sf"/>
</dbReference>
<dbReference type="InterPro" id="IPR005996">
    <property type="entry name" value="Ribosomal_uL30_bac-type"/>
</dbReference>
<dbReference type="InterPro" id="IPR018038">
    <property type="entry name" value="Ribosomal_uL30_CS"/>
</dbReference>
<dbReference type="InterPro" id="IPR016082">
    <property type="entry name" value="Ribosomal_uL30_ferredoxin-like"/>
</dbReference>
<dbReference type="NCBIfam" id="TIGR01308">
    <property type="entry name" value="rpmD_bact"/>
    <property type="match status" value="1"/>
</dbReference>
<dbReference type="PANTHER" id="PTHR15892:SF2">
    <property type="entry name" value="LARGE RIBOSOMAL SUBUNIT PROTEIN UL30M"/>
    <property type="match status" value="1"/>
</dbReference>
<dbReference type="PANTHER" id="PTHR15892">
    <property type="entry name" value="MITOCHONDRIAL RIBOSOMAL PROTEIN L30"/>
    <property type="match status" value="1"/>
</dbReference>
<dbReference type="Pfam" id="PF00327">
    <property type="entry name" value="Ribosomal_L30"/>
    <property type="match status" value="1"/>
</dbReference>
<dbReference type="PIRSF" id="PIRSF002211">
    <property type="entry name" value="Ribosomal_L30_bac-type"/>
    <property type="match status" value="1"/>
</dbReference>
<dbReference type="SUPFAM" id="SSF55129">
    <property type="entry name" value="Ribosomal protein L30p/L7e"/>
    <property type="match status" value="1"/>
</dbReference>
<dbReference type="PROSITE" id="PS00634">
    <property type="entry name" value="RIBOSOMAL_L30"/>
    <property type="match status" value="1"/>
</dbReference>
<name>RL30_STRP1</name>
<organism>
    <name type="scientific">Streptococcus pyogenes serotype M1</name>
    <dbReference type="NCBI Taxonomy" id="301447"/>
    <lineage>
        <taxon>Bacteria</taxon>
        <taxon>Bacillati</taxon>
        <taxon>Bacillota</taxon>
        <taxon>Bacilli</taxon>
        <taxon>Lactobacillales</taxon>
        <taxon>Streptococcaceae</taxon>
        <taxon>Streptococcus</taxon>
    </lineage>
</organism>
<sequence>MAQIKITLTKSPIGRKPEQRKTVVALGLGKLNSSVVKEDNAAIRGMVTAISHLVTVEDVK</sequence>
<protein>
    <recommendedName>
        <fullName evidence="1">Large ribosomal subunit protein uL30</fullName>
    </recommendedName>
    <alternativeName>
        <fullName evidence="2">50S ribosomal protein L30</fullName>
    </alternativeName>
</protein>